<accession>P03352</accession>
<organismHost>
    <name type="scientific">Ovis aries</name>
    <name type="common">Sheep</name>
    <dbReference type="NCBI Taxonomy" id="9940"/>
</organismHost>
<proteinExistence type="inferred from homology"/>
<organism>
    <name type="scientific">Maedi visna virus (strain 1514)</name>
    <name type="common">MVV</name>
    <name type="synonym">Visna lentivirus</name>
    <dbReference type="NCBI Taxonomy" id="11742"/>
    <lineage>
        <taxon>Viruses</taxon>
        <taxon>Riboviria</taxon>
        <taxon>Pararnavirae</taxon>
        <taxon>Artverviricota</taxon>
        <taxon>Revtraviricetes</taxon>
        <taxon>Ortervirales</taxon>
        <taxon>Retroviridae</taxon>
        <taxon>Orthoretrovirinae</taxon>
        <taxon>Lentivirus</taxon>
        <taxon>Visna-maedi virus</taxon>
    </lineage>
</organism>
<feature type="chain" id="PRO_0000443355" description="Gag polyprotein">
    <location>
        <begin position="1"/>
        <end position="442"/>
    </location>
</feature>
<feature type="chain" id="PRO_0000038799" description="Matrix protein p16">
    <location>
        <begin position="1"/>
        <end position="143"/>
    </location>
</feature>
<feature type="chain" id="PRO_0000038800" description="Capsid protein p25">
    <location>
        <begin position="144"/>
        <end position="363"/>
    </location>
</feature>
<feature type="chain" id="PRO_0000038801" description="Nucleocapsid protein p14">
    <location>
        <begin position="364"/>
        <end position="442"/>
    </location>
</feature>
<feature type="zinc finger region" description="CCHC-type 1" evidence="5">
    <location>
        <begin position="385"/>
        <end position="402"/>
    </location>
</feature>
<feature type="zinc finger region" description="CCHC-type 2" evidence="5">
    <location>
        <begin position="404"/>
        <end position="421"/>
    </location>
</feature>
<feature type="region of interest" description="Disordered" evidence="6">
    <location>
        <begin position="420"/>
        <end position="442"/>
    </location>
</feature>
<feature type="short sequence motif" description="PTAP/PSAP motif">
    <location>
        <begin position="436"/>
        <end position="439"/>
    </location>
</feature>
<feature type="site" description="Cleavage; by viral protease" evidence="3">
    <location>
        <begin position="363"/>
        <end position="364"/>
    </location>
</feature>
<comment type="function">
    <molecule>Gag polyprotein</molecule>
    <text evidence="1">Mediates, with Gag-Pol polyprotein, the essential events in virion assembly, including binding the plasma membrane, making the protein-protein interactions necessary to create spherical particles, recruiting the viral Env proteins, and packaging the genomic RNA via direct interactions with the RNA packaging sequence.</text>
</comment>
<comment type="function">
    <molecule>Matrix protein p16</molecule>
    <text evidence="2">Targets the polyprotein to the plasma membrane.</text>
</comment>
<comment type="function">
    <molecule>Capsid protein p25</molecule>
    <text evidence="1">Forms the core that encapsulates the genomic RNA-nucleocapsid complex in the virion.</text>
</comment>
<comment type="function">
    <molecule>Nucleocapsid protein p14</molecule>
    <text evidence="1">Encapsulates and protects viral dimeric unspliced genomic RNA (gRNA). Binds these RNAs through its zinc fingers. Acts as a nucleic acid chaperone which is involved in rearrangement of nucleic acid secondary structure during gRNA retrotranscription. Also facilitates template switch leading to recombination.</text>
</comment>
<comment type="subcellular location">
    <molecule>Matrix protein p16</molecule>
    <subcellularLocation>
        <location evidence="7">Virion</location>
    </subcellularLocation>
</comment>
<comment type="subcellular location">
    <molecule>Capsid protein p25</molecule>
    <subcellularLocation>
        <location evidence="7">Virion</location>
    </subcellularLocation>
</comment>
<comment type="subcellular location">
    <molecule>Nucleocapsid protein p14</molecule>
    <subcellularLocation>
        <location evidence="7">Virion</location>
    </subcellularLocation>
</comment>
<comment type="alternative products">
    <event type="ribosomal frameshifting"/>
    <isoform>
        <id>P03352-1</id>
        <name>Gag polyprotein</name>
        <sequence type="displayed"/>
    </isoform>
    <isoform>
        <id>P03370-1</id>
        <name>Gag-Pol polyprotein</name>
        <sequence type="external"/>
    </isoform>
</comment>
<comment type="domain">
    <text evidence="7">Late-budding domains (L domains) are short sequence motifs essential for viral particle budding. They recruit proteins of the host ESCRT machinery (Endosomal Sorting Complex Required for Transport) or ESCRT-associated proteins. Nucleocapsid protein p14 contains one L domain: a PTAP/PSAP motif, which interacts with the UEV domain of TSG101.</text>
</comment>
<comment type="PTM">
    <molecule>Gag polyprotein</molecule>
    <text evidence="7">Specific enzymatic cleavages by the viral protease yield mature proteins.</text>
</comment>
<comment type="miscellaneous">
    <molecule>Isoform Gag polyprotein</molecule>
    <text evidence="4">Produced by conventional translation.</text>
</comment>
<comment type="similarity">
    <text evidence="7">Belongs to the Ovine/caprine lentivirus group gag polyprotein family.</text>
</comment>
<comment type="sequence caution" evidence="7">
    <conflict type="erroneous initiation">
        <sequence resource="EMBL-CDS" id="AAA17520"/>
    </conflict>
    <text>Extended N-terminus.</text>
</comment>
<evidence type="ECO:0000250" key="1">
    <source>
        <dbReference type="UniProtKB" id="P04585"/>
    </source>
</evidence>
<evidence type="ECO:0000250" key="2">
    <source>
        <dbReference type="UniProtKB" id="P12497"/>
    </source>
</evidence>
<evidence type="ECO:0000250" key="3">
    <source>
        <dbReference type="UniProtKB" id="P35955"/>
    </source>
</evidence>
<evidence type="ECO:0000250" key="4">
    <source>
        <dbReference type="UniProtKB" id="P35956"/>
    </source>
</evidence>
<evidence type="ECO:0000255" key="5">
    <source>
        <dbReference type="PROSITE-ProRule" id="PRU00047"/>
    </source>
</evidence>
<evidence type="ECO:0000256" key="6">
    <source>
        <dbReference type="SAM" id="MobiDB-lite"/>
    </source>
</evidence>
<evidence type="ECO:0000305" key="7"/>
<reference key="1">
    <citation type="journal article" date="1985" name="Cell">
        <title>Nucleotide sequence of the visna lentivirus: relationship to the AIDS virus.</title>
        <authorList>
            <person name="Sonigo P."/>
            <person name="Alizon M."/>
            <person name="Staskus K."/>
            <person name="Klatzmann D."/>
            <person name="Cole S."/>
            <person name="Danos O."/>
            <person name="Retzel E."/>
            <person name="Tiollais P."/>
            <person name="Haase A."/>
            <person name="Wain-Hobson S."/>
        </authorList>
    </citation>
    <scope>NUCLEOTIDE SEQUENCE [GENOMIC RNA]</scope>
</reference>
<reference key="2">
    <citation type="journal article" date="1987" name="J. Virol.">
        <title>The visna virus genome: evidence for a hypervariable site in the env gene and sequence homology among lentivirus envelope proteins.</title>
        <authorList>
            <person name="Braun M.J."/>
            <person name="Clements J.E."/>
            <person name="Gonda M.A."/>
        </authorList>
    </citation>
    <scope>NUCLEOTIDE SEQUENCE [GENOMIC RNA]</scope>
</reference>
<dbReference type="EMBL" id="M10608">
    <property type="protein sequence ID" value="AAA17520.1"/>
    <property type="status" value="ALT_INIT"/>
    <property type="molecule type" value="Unassigned_DNA"/>
</dbReference>
<dbReference type="EMBL" id="A15114">
    <property type="protein sequence ID" value="CAA01213.1"/>
    <property type="molecule type" value="Unassigned_RNA"/>
</dbReference>
<dbReference type="SMR" id="P03352"/>
<dbReference type="Proteomes" id="UP000158691">
    <property type="component" value="Genome"/>
</dbReference>
<dbReference type="GO" id="GO:0019028">
    <property type="term" value="C:viral capsid"/>
    <property type="evidence" value="ECO:0007669"/>
    <property type="project" value="UniProtKB-KW"/>
</dbReference>
<dbReference type="GO" id="GO:0003676">
    <property type="term" value="F:nucleic acid binding"/>
    <property type="evidence" value="ECO:0007669"/>
    <property type="project" value="InterPro"/>
</dbReference>
<dbReference type="GO" id="GO:0008270">
    <property type="term" value="F:zinc ion binding"/>
    <property type="evidence" value="ECO:0007669"/>
    <property type="project" value="UniProtKB-KW"/>
</dbReference>
<dbReference type="GO" id="GO:0039702">
    <property type="term" value="P:viral budding via host ESCRT complex"/>
    <property type="evidence" value="ECO:0007669"/>
    <property type="project" value="UniProtKB-KW"/>
</dbReference>
<dbReference type="GO" id="GO:0075523">
    <property type="term" value="P:viral translational frameshifting"/>
    <property type="evidence" value="ECO:0007669"/>
    <property type="project" value="UniProtKB-KW"/>
</dbReference>
<dbReference type="Gene3D" id="1.10.1200.30">
    <property type="match status" value="1"/>
</dbReference>
<dbReference type="Gene3D" id="1.10.375.10">
    <property type="entry name" value="Human Immunodeficiency Virus Type 1 Capsid Protein"/>
    <property type="match status" value="1"/>
</dbReference>
<dbReference type="Gene3D" id="4.10.60.10">
    <property type="entry name" value="Zinc finger, CCHC-type"/>
    <property type="match status" value="1"/>
</dbReference>
<dbReference type="InterPro" id="IPR045345">
    <property type="entry name" value="Gag_p24_C"/>
</dbReference>
<dbReference type="InterPro" id="IPR050195">
    <property type="entry name" value="Primate_lentivir_Gag_pol-like"/>
</dbReference>
<dbReference type="InterPro" id="IPR008916">
    <property type="entry name" value="Retrov_capsid_C"/>
</dbReference>
<dbReference type="InterPro" id="IPR008919">
    <property type="entry name" value="Retrov_capsid_N"/>
</dbReference>
<dbReference type="InterPro" id="IPR001878">
    <property type="entry name" value="Znf_CCHC"/>
</dbReference>
<dbReference type="InterPro" id="IPR036875">
    <property type="entry name" value="Znf_CCHC_sf"/>
</dbReference>
<dbReference type="PANTHER" id="PTHR40389:SF4">
    <property type="match status" value="1"/>
</dbReference>
<dbReference type="PANTHER" id="PTHR40389">
    <property type="entry name" value="ENDOGENOUS RETROVIRUS GROUP K MEMBER 24 GAG POLYPROTEIN-RELATED"/>
    <property type="match status" value="1"/>
</dbReference>
<dbReference type="Pfam" id="PF00607">
    <property type="entry name" value="Gag_p24"/>
    <property type="match status" value="1"/>
</dbReference>
<dbReference type="Pfam" id="PF19317">
    <property type="entry name" value="Gag_p24_C"/>
    <property type="match status" value="1"/>
</dbReference>
<dbReference type="Pfam" id="PF00098">
    <property type="entry name" value="zf-CCHC"/>
    <property type="match status" value="2"/>
</dbReference>
<dbReference type="SMART" id="SM00343">
    <property type="entry name" value="ZnF_C2HC"/>
    <property type="match status" value="2"/>
</dbReference>
<dbReference type="SUPFAM" id="SSF47353">
    <property type="entry name" value="Retrovirus capsid dimerization domain-like"/>
    <property type="match status" value="1"/>
</dbReference>
<dbReference type="SUPFAM" id="SSF47943">
    <property type="entry name" value="Retrovirus capsid protein, N-terminal core domain"/>
    <property type="match status" value="1"/>
</dbReference>
<dbReference type="SUPFAM" id="SSF57756">
    <property type="entry name" value="Retrovirus zinc finger-like domains"/>
    <property type="match status" value="1"/>
</dbReference>
<dbReference type="PROSITE" id="PS50158">
    <property type="entry name" value="ZF_CCHC"/>
    <property type="match status" value="2"/>
</dbReference>
<keyword id="KW-0167">Capsid protein</keyword>
<keyword id="KW-0945">Host-virus interaction</keyword>
<keyword id="KW-0479">Metal-binding</keyword>
<keyword id="KW-0677">Repeat</keyword>
<keyword id="KW-0688">Ribosomal frameshifting</keyword>
<keyword id="KW-1198">Viral budding</keyword>
<keyword id="KW-1187">Viral budding via the host ESCRT complexes</keyword>
<keyword id="KW-1188">Viral release from host cell</keyword>
<keyword id="KW-0946">Virion</keyword>
<keyword id="KW-0862">Zinc</keyword>
<keyword id="KW-0863">Zinc-finger</keyword>
<protein>
    <recommendedName>
        <fullName>Gag polyprotein</fullName>
    </recommendedName>
    <component>
        <recommendedName>
            <fullName>Matrix protein p16</fullName>
        </recommendedName>
    </component>
    <component>
        <recommendedName>
            <fullName>Capsid protein p25</fullName>
        </recommendedName>
    </component>
    <component>
        <recommendedName>
            <fullName>Nucleocapsid protein p14</fullName>
        </recommendedName>
    </component>
</protein>
<sequence length="442" mass="49866">MAKQGSKEKKGYPELKEVIKATCKIRVGPGKETLTEGNCLWALKTIDFIFEDLKTEPWTITKMYTVWDRLKGLTPEETSKREFASLQATLACIMCSQMGMKPETVQAAKGIISMKEGLHENKEAKGEKVEQLYPNLEKHREVYPIVNLQAGGRSWKAVESVVFQQLQTVAMQHGLVSEDFERQLAYYATTWTSKDILEVLAMMPGNRAQKELIQGKLNEEAERWVRQNPPGPNVLTVDQIMGVGQTNQQASQANMDQARQICLQWVITALRSVRHMSHRPGNPMLVKQKNTESYEDFIARLLEAIDAEPVTDPIKTYLKVTLSYTNASTDCQKQMDRTLGTRVQQATVEEKMQACRDVGSEGFKMQLLAQALRPQGKAGHKGVNQKCYNCGKPGHLARQCRQGIICHHCGKRGHMQKDCRQKKQQGNNRRGPRVVPSAPPML</sequence>
<name>GAG_VILV</name>
<gene>
    <name type="primary">gag</name>
</gene>